<reference key="1">
    <citation type="submission" date="2006-03" db="EMBL/GenBank/DDBJ databases">
        <title>Complete sequence of chromosome of Nitrobacter hamburgensis X14.</title>
        <authorList>
            <consortium name="US DOE Joint Genome Institute"/>
            <person name="Copeland A."/>
            <person name="Lucas S."/>
            <person name="Lapidus A."/>
            <person name="Barry K."/>
            <person name="Detter J.C."/>
            <person name="Glavina del Rio T."/>
            <person name="Hammon N."/>
            <person name="Israni S."/>
            <person name="Dalin E."/>
            <person name="Tice H."/>
            <person name="Pitluck S."/>
            <person name="Chain P."/>
            <person name="Malfatti S."/>
            <person name="Shin M."/>
            <person name="Vergez L."/>
            <person name="Schmutz J."/>
            <person name="Larimer F."/>
            <person name="Land M."/>
            <person name="Hauser L."/>
            <person name="Kyrpides N."/>
            <person name="Ivanova N."/>
            <person name="Ward B."/>
            <person name="Arp D."/>
            <person name="Klotz M."/>
            <person name="Stein L."/>
            <person name="O'Mullan G."/>
            <person name="Starkenburg S."/>
            <person name="Sayavedra L."/>
            <person name="Poret-Peterson A.T."/>
            <person name="Gentry M.E."/>
            <person name="Bruce D."/>
            <person name="Richardson P."/>
        </authorList>
    </citation>
    <scope>NUCLEOTIDE SEQUENCE [LARGE SCALE GENOMIC DNA]</scope>
    <source>
        <strain>DSM 10229 / NCIMB 13809 / X14</strain>
    </source>
</reference>
<protein>
    <recommendedName>
        <fullName evidence="1">Membrane protein insertase YidC</fullName>
    </recommendedName>
    <alternativeName>
        <fullName evidence="1">Foldase YidC</fullName>
    </alternativeName>
    <alternativeName>
        <fullName evidence="1">Membrane integrase YidC</fullName>
    </alternativeName>
    <alternativeName>
        <fullName evidence="1">Membrane protein YidC</fullName>
    </alternativeName>
</protein>
<accession>Q1QH68</accession>
<keyword id="KW-0997">Cell inner membrane</keyword>
<keyword id="KW-1003">Cell membrane</keyword>
<keyword id="KW-0143">Chaperone</keyword>
<keyword id="KW-0472">Membrane</keyword>
<keyword id="KW-0653">Protein transport</keyword>
<keyword id="KW-1185">Reference proteome</keyword>
<keyword id="KW-0812">Transmembrane</keyword>
<keyword id="KW-1133">Transmembrane helix</keyword>
<keyword id="KW-0813">Transport</keyword>
<feature type="chain" id="PRO_1000070127" description="Membrane protein insertase YidC">
    <location>
        <begin position="1"/>
        <end position="609"/>
    </location>
</feature>
<feature type="transmembrane region" description="Helical" evidence="1">
    <location>
        <begin position="9"/>
        <end position="29"/>
    </location>
</feature>
<feature type="transmembrane region" description="Helical" evidence="1">
    <location>
        <begin position="375"/>
        <end position="395"/>
    </location>
</feature>
<feature type="transmembrane region" description="Helical" evidence="1">
    <location>
        <begin position="449"/>
        <end position="469"/>
    </location>
</feature>
<feature type="transmembrane region" description="Helical" evidence="1">
    <location>
        <begin position="507"/>
        <end position="527"/>
    </location>
</feature>
<feature type="transmembrane region" description="Helical" evidence="1">
    <location>
        <begin position="546"/>
        <end position="566"/>
    </location>
</feature>
<feature type="region of interest" description="Disordered" evidence="2">
    <location>
        <begin position="35"/>
        <end position="63"/>
    </location>
</feature>
<comment type="function">
    <text evidence="1">Required for the insertion and/or proper folding and/or complex formation of integral membrane proteins into the membrane. Involved in integration of membrane proteins that insert both dependently and independently of the Sec translocase complex, as well as at least some lipoproteins. Aids folding of multispanning membrane proteins.</text>
</comment>
<comment type="subunit">
    <text evidence="1">Interacts with the Sec translocase complex via SecD. Specifically interacts with transmembrane segments of nascent integral membrane proteins during membrane integration.</text>
</comment>
<comment type="subcellular location">
    <subcellularLocation>
        <location evidence="1">Cell inner membrane</location>
        <topology evidence="1">Multi-pass membrane protein</topology>
    </subcellularLocation>
</comment>
<comment type="similarity">
    <text evidence="1">Belongs to the OXA1/ALB3/YidC family. Type 1 subfamily.</text>
</comment>
<sequence>MMSENRNTIIAIVLSGLILIAWQYFYNIPQMEKDRAAQQAQSQTAKSPTEPTPNSPKPDHPAAESVVARGVAIATTPRVKIDTPRLSGSISLKGARIDDLLLTKFRETVDPASPAIELFSPSGTTTPYYAEFGWVAATGSTARVPDQNTVWQQEGSGALTQSTPVTLKYDNGEGLTFRRTIAVDDHYLFTIKDEVTNAGGAPVTLYPFALISRHGTPAVSGYYILHEGLIGYLGDQKLQEYSYKKIDEAKSVSFKVTNGWLGITDKYWAAALLPDTSAQLQARFSSNESGSVKTYQADYLEDAQTIPVGGTGSVNTRLFAGAKEAGVVGINFPFVELGGYNKQLGLNHFDLLIDWGWFYFITKPMFLALDFFFHVFGNFGIAILFVTVLIKAIFFPLANRSYASMAKMKAVQPQIAALKERFPDDKMKLQQEMMEIYKKEKINPISGCLPMVLQIPVFFSLYKVLFVTIEMRHAPFFAWIKDLSAPDPTHIFNLFGLLPYDPSAVPLLGPYLAIGAWPIIMGITMWFQMKLNPTPPDPTQKLIFDWMPVIFTFMLAAFPAGLVIYWAWNNTLSVIQQSYIMRRNGVKVELLNNVKSVFRRKSSDKPAKT</sequence>
<gene>
    <name evidence="1" type="primary">yidC</name>
    <name type="ordered locus">Nham_3703</name>
</gene>
<name>YIDC_NITHX</name>
<organism>
    <name type="scientific">Nitrobacter hamburgensis (strain DSM 10229 / NCIMB 13809 / X14)</name>
    <dbReference type="NCBI Taxonomy" id="323097"/>
    <lineage>
        <taxon>Bacteria</taxon>
        <taxon>Pseudomonadati</taxon>
        <taxon>Pseudomonadota</taxon>
        <taxon>Alphaproteobacteria</taxon>
        <taxon>Hyphomicrobiales</taxon>
        <taxon>Nitrobacteraceae</taxon>
        <taxon>Nitrobacter</taxon>
    </lineage>
</organism>
<evidence type="ECO:0000255" key="1">
    <source>
        <dbReference type="HAMAP-Rule" id="MF_01810"/>
    </source>
</evidence>
<evidence type="ECO:0000256" key="2">
    <source>
        <dbReference type="SAM" id="MobiDB-lite"/>
    </source>
</evidence>
<proteinExistence type="inferred from homology"/>
<dbReference type="EMBL" id="CP000319">
    <property type="protein sequence ID" value="ABE64429.1"/>
    <property type="molecule type" value="Genomic_DNA"/>
</dbReference>
<dbReference type="SMR" id="Q1QH68"/>
<dbReference type="STRING" id="323097.Nham_3703"/>
<dbReference type="KEGG" id="nha:Nham_3703"/>
<dbReference type="eggNOG" id="COG0706">
    <property type="taxonomic scope" value="Bacteria"/>
</dbReference>
<dbReference type="HOGENOM" id="CLU_016535_1_0_5"/>
<dbReference type="Proteomes" id="UP000001953">
    <property type="component" value="Chromosome"/>
</dbReference>
<dbReference type="GO" id="GO:0005886">
    <property type="term" value="C:plasma membrane"/>
    <property type="evidence" value="ECO:0007669"/>
    <property type="project" value="UniProtKB-SubCell"/>
</dbReference>
<dbReference type="GO" id="GO:0032977">
    <property type="term" value="F:membrane insertase activity"/>
    <property type="evidence" value="ECO:0007669"/>
    <property type="project" value="InterPro"/>
</dbReference>
<dbReference type="GO" id="GO:0051205">
    <property type="term" value="P:protein insertion into membrane"/>
    <property type="evidence" value="ECO:0007669"/>
    <property type="project" value="TreeGrafter"/>
</dbReference>
<dbReference type="GO" id="GO:0015031">
    <property type="term" value="P:protein transport"/>
    <property type="evidence" value="ECO:0007669"/>
    <property type="project" value="UniProtKB-KW"/>
</dbReference>
<dbReference type="CDD" id="cd20070">
    <property type="entry name" value="5TM_YidC_Alb3"/>
    <property type="match status" value="1"/>
</dbReference>
<dbReference type="CDD" id="cd19961">
    <property type="entry name" value="EcYidC-like_peri"/>
    <property type="match status" value="1"/>
</dbReference>
<dbReference type="FunFam" id="2.70.98.90:FF:000006">
    <property type="entry name" value="Membrane protein insertase YidC"/>
    <property type="match status" value="1"/>
</dbReference>
<dbReference type="Gene3D" id="2.70.98.90">
    <property type="match status" value="1"/>
</dbReference>
<dbReference type="HAMAP" id="MF_01810">
    <property type="entry name" value="YidC_type1"/>
    <property type="match status" value="1"/>
</dbReference>
<dbReference type="InterPro" id="IPR019998">
    <property type="entry name" value="Membr_insert_YidC"/>
</dbReference>
<dbReference type="InterPro" id="IPR028053">
    <property type="entry name" value="Membr_insert_YidC_N"/>
</dbReference>
<dbReference type="InterPro" id="IPR001708">
    <property type="entry name" value="YidC/ALB3/OXA1/COX18"/>
</dbReference>
<dbReference type="InterPro" id="IPR028055">
    <property type="entry name" value="YidC/Oxa/ALB_C"/>
</dbReference>
<dbReference type="InterPro" id="IPR047196">
    <property type="entry name" value="YidC_ALB_C"/>
</dbReference>
<dbReference type="InterPro" id="IPR038221">
    <property type="entry name" value="YidC_periplasmic_sf"/>
</dbReference>
<dbReference type="NCBIfam" id="NF002353">
    <property type="entry name" value="PRK01318.1-4"/>
    <property type="match status" value="1"/>
</dbReference>
<dbReference type="NCBIfam" id="TIGR03593">
    <property type="entry name" value="yidC_nterm"/>
    <property type="match status" value="1"/>
</dbReference>
<dbReference type="NCBIfam" id="TIGR03592">
    <property type="entry name" value="yidC_oxa1_cterm"/>
    <property type="match status" value="1"/>
</dbReference>
<dbReference type="PANTHER" id="PTHR12428:SF65">
    <property type="entry name" value="CYTOCHROME C OXIDASE ASSEMBLY PROTEIN COX18, MITOCHONDRIAL"/>
    <property type="match status" value="1"/>
</dbReference>
<dbReference type="PANTHER" id="PTHR12428">
    <property type="entry name" value="OXA1"/>
    <property type="match status" value="1"/>
</dbReference>
<dbReference type="Pfam" id="PF02096">
    <property type="entry name" value="60KD_IMP"/>
    <property type="match status" value="1"/>
</dbReference>
<dbReference type="Pfam" id="PF14849">
    <property type="entry name" value="YidC_periplas"/>
    <property type="match status" value="1"/>
</dbReference>
<dbReference type="PRINTS" id="PR00701">
    <property type="entry name" value="60KDINNERMP"/>
</dbReference>
<dbReference type="PRINTS" id="PR01900">
    <property type="entry name" value="YIDCPROTEIN"/>
</dbReference>